<protein>
    <recommendedName>
        <fullName evidence="1">Uroporphyrinogen decarboxylase</fullName>
        <shortName evidence="1">UPD</shortName>
        <shortName evidence="1">URO-D</shortName>
        <ecNumber evidence="1">4.1.1.37</ecNumber>
    </recommendedName>
</protein>
<feature type="chain" id="PRO_0000187612" description="Uroporphyrinogen decarboxylase">
    <location>
        <begin position="1"/>
        <end position="353"/>
    </location>
</feature>
<feature type="binding site" evidence="1">
    <location>
        <begin position="27"/>
        <end position="31"/>
    </location>
    <ligand>
        <name>substrate</name>
    </ligand>
</feature>
<feature type="binding site" evidence="1">
    <location>
        <position position="46"/>
    </location>
    <ligand>
        <name>substrate</name>
    </ligand>
</feature>
<feature type="binding site" evidence="1">
    <location>
        <position position="76"/>
    </location>
    <ligand>
        <name>substrate</name>
    </ligand>
</feature>
<feature type="binding site" evidence="1">
    <location>
        <position position="152"/>
    </location>
    <ligand>
        <name>substrate</name>
    </ligand>
</feature>
<feature type="binding site" evidence="1">
    <location>
        <position position="207"/>
    </location>
    <ligand>
        <name>substrate</name>
    </ligand>
</feature>
<feature type="binding site" evidence="1">
    <location>
        <position position="321"/>
    </location>
    <ligand>
        <name>substrate</name>
    </ligand>
</feature>
<feature type="site" description="Transition state stabilizer" evidence="1">
    <location>
        <position position="76"/>
    </location>
</feature>
<sequence length="353" mass="39889">MTKITNDLFLKAARKEQVDRIPVWYMRQAGRSQPEYRKLKEKYSLFEITHQPEICAYVTKLPVDQYGVDAAILYKDIMTPLPGMGVDVEIKSGIGPVIHNPIRSFQDVEKLTMFKPEIEVPYVLDTIKLLADDMLDVPLIGFAGAPFTLASYMIEGGPSKNYHQTKSFMYREPEVWAILMEKLGRMTANYLIAQINAGASAVQLFDSWVGALSRADYAEYIRPVIEMIVREVKAVHPTTPIIMQAVGASHLLAEWETMPLDVVGVDWRETITSARKKVPTKAIQGNLDPSTLLAPEKCLKEANRILQEGVLEPGYIFNLGHGVFPEVPPEMLKKLTNYIHERSEILLKKDDIK</sequence>
<comment type="function">
    <text evidence="1">Catalyzes the decarboxylation of four acetate groups of uroporphyrinogen-III to yield coproporphyrinogen-III.</text>
</comment>
<comment type="catalytic activity">
    <reaction evidence="1">
        <text>uroporphyrinogen III + 4 H(+) = coproporphyrinogen III + 4 CO2</text>
        <dbReference type="Rhea" id="RHEA:19865"/>
        <dbReference type="ChEBI" id="CHEBI:15378"/>
        <dbReference type="ChEBI" id="CHEBI:16526"/>
        <dbReference type="ChEBI" id="CHEBI:57308"/>
        <dbReference type="ChEBI" id="CHEBI:57309"/>
        <dbReference type="EC" id="4.1.1.37"/>
    </reaction>
</comment>
<comment type="pathway">
    <text evidence="1">Porphyrin-containing compound metabolism; protoporphyrin-IX biosynthesis; coproporphyrinogen-III from 5-aminolevulinate: step 4/4.</text>
</comment>
<comment type="subunit">
    <text evidence="1">Homodimer.</text>
</comment>
<comment type="subcellular location">
    <subcellularLocation>
        <location evidence="1">Cytoplasm</location>
    </subcellularLocation>
</comment>
<comment type="similarity">
    <text evidence="1">Belongs to the uroporphyrinogen decarboxylase family.</text>
</comment>
<name>DCUP_LISMF</name>
<dbReference type="EC" id="4.1.1.37" evidence="1"/>
<dbReference type="EMBL" id="AE017262">
    <property type="protein sequence ID" value="AAT05012.1"/>
    <property type="molecule type" value="Genomic_DNA"/>
</dbReference>
<dbReference type="RefSeq" id="WP_003726244.1">
    <property type="nucleotide sequence ID" value="NC_002973.6"/>
</dbReference>
<dbReference type="SMR" id="Q71XF3"/>
<dbReference type="KEGG" id="lmf:LMOf2365_2245"/>
<dbReference type="HOGENOM" id="CLU_040933_0_1_9"/>
<dbReference type="UniPathway" id="UPA00251">
    <property type="reaction ID" value="UER00321"/>
</dbReference>
<dbReference type="GO" id="GO:0005829">
    <property type="term" value="C:cytosol"/>
    <property type="evidence" value="ECO:0007669"/>
    <property type="project" value="TreeGrafter"/>
</dbReference>
<dbReference type="GO" id="GO:0004853">
    <property type="term" value="F:uroporphyrinogen decarboxylase activity"/>
    <property type="evidence" value="ECO:0007669"/>
    <property type="project" value="UniProtKB-UniRule"/>
</dbReference>
<dbReference type="GO" id="GO:0006782">
    <property type="term" value="P:protoporphyrinogen IX biosynthetic process"/>
    <property type="evidence" value="ECO:0007669"/>
    <property type="project" value="UniProtKB-UniRule"/>
</dbReference>
<dbReference type="CDD" id="cd00717">
    <property type="entry name" value="URO-D"/>
    <property type="match status" value="1"/>
</dbReference>
<dbReference type="FunFam" id="3.20.20.210:FF:000005">
    <property type="entry name" value="Uroporphyrinogen decarboxylase"/>
    <property type="match status" value="1"/>
</dbReference>
<dbReference type="Gene3D" id="3.20.20.210">
    <property type="match status" value="1"/>
</dbReference>
<dbReference type="HAMAP" id="MF_00218">
    <property type="entry name" value="URO_D"/>
    <property type="match status" value="1"/>
</dbReference>
<dbReference type="InterPro" id="IPR038071">
    <property type="entry name" value="UROD/MetE-like_sf"/>
</dbReference>
<dbReference type="InterPro" id="IPR006361">
    <property type="entry name" value="Uroporphyrinogen_deCO2ase_HemE"/>
</dbReference>
<dbReference type="InterPro" id="IPR000257">
    <property type="entry name" value="Uroporphyrinogen_deCOase"/>
</dbReference>
<dbReference type="NCBIfam" id="TIGR01464">
    <property type="entry name" value="hemE"/>
    <property type="match status" value="1"/>
</dbReference>
<dbReference type="PANTHER" id="PTHR21091">
    <property type="entry name" value="METHYLTETRAHYDROFOLATE:HOMOCYSTEINE METHYLTRANSFERASE RELATED"/>
    <property type="match status" value="1"/>
</dbReference>
<dbReference type="PANTHER" id="PTHR21091:SF169">
    <property type="entry name" value="UROPORPHYRINOGEN DECARBOXYLASE"/>
    <property type="match status" value="1"/>
</dbReference>
<dbReference type="Pfam" id="PF01208">
    <property type="entry name" value="URO-D"/>
    <property type="match status" value="1"/>
</dbReference>
<dbReference type="SUPFAM" id="SSF51726">
    <property type="entry name" value="UROD/MetE-like"/>
    <property type="match status" value="1"/>
</dbReference>
<dbReference type="PROSITE" id="PS00906">
    <property type="entry name" value="UROD_1"/>
    <property type="match status" value="1"/>
</dbReference>
<dbReference type="PROSITE" id="PS00907">
    <property type="entry name" value="UROD_2"/>
    <property type="match status" value="1"/>
</dbReference>
<gene>
    <name evidence="1" type="primary">hemE</name>
    <name type="ordered locus">LMOf2365_2245</name>
</gene>
<evidence type="ECO:0000255" key="1">
    <source>
        <dbReference type="HAMAP-Rule" id="MF_00218"/>
    </source>
</evidence>
<reference key="1">
    <citation type="journal article" date="2004" name="Nucleic Acids Res.">
        <title>Whole genome comparisons of serotype 4b and 1/2a strains of the food-borne pathogen Listeria monocytogenes reveal new insights into the core genome components of this species.</title>
        <authorList>
            <person name="Nelson K.E."/>
            <person name="Fouts D.E."/>
            <person name="Mongodin E.F."/>
            <person name="Ravel J."/>
            <person name="DeBoy R.T."/>
            <person name="Kolonay J.F."/>
            <person name="Rasko D.A."/>
            <person name="Angiuoli S.V."/>
            <person name="Gill S.R."/>
            <person name="Paulsen I.T."/>
            <person name="Peterson J.D."/>
            <person name="White O."/>
            <person name="Nelson W.C."/>
            <person name="Nierman W.C."/>
            <person name="Beanan M.J."/>
            <person name="Brinkac L.M."/>
            <person name="Daugherty S.C."/>
            <person name="Dodson R.J."/>
            <person name="Durkin A.S."/>
            <person name="Madupu R."/>
            <person name="Haft D.H."/>
            <person name="Selengut J."/>
            <person name="Van Aken S.E."/>
            <person name="Khouri H.M."/>
            <person name="Fedorova N."/>
            <person name="Forberger H.A."/>
            <person name="Tran B."/>
            <person name="Kathariou S."/>
            <person name="Wonderling L.D."/>
            <person name="Uhlich G.A."/>
            <person name="Bayles D.O."/>
            <person name="Luchansky J.B."/>
            <person name="Fraser C.M."/>
        </authorList>
    </citation>
    <scope>NUCLEOTIDE SEQUENCE [LARGE SCALE GENOMIC DNA]</scope>
    <source>
        <strain>F2365</strain>
    </source>
</reference>
<accession>Q71XF3</accession>
<keyword id="KW-0963">Cytoplasm</keyword>
<keyword id="KW-0210">Decarboxylase</keyword>
<keyword id="KW-0456">Lyase</keyword>
<keyword id="KW-0627">Porphyrin biosynthesis</keyword>
<proteinExistence type="inferred from homology"/>
<organism>
    <name type="scientific">Listeria monocytogenes serotype 4b (strain F2365)</name>
    <dbReference type="NCBI Taxonomy" id="265669"/>
    <lineage>
        <taxon>Bacteria</taxon>
        <taxon>Bacillati</taxon>
        <taxon>Bacillota</taxon>
        <taxon>Bacilli</taxon>
        <taxon>Bacillales</taxon>
        <taxon>Listeriaceae</taxon>
        <taxon>Listeria</taxon>
    </lineage>
</organism>